<feature type="chain" id="PRO_0000323658" description="DNA-directed RNA polymerase subunit alpha">
    <location>
        <begin position="1"/>
        <end position="333"/>
    </location>
</feature>
<feature type="region of interest" description="Alpha N-terminal domain (alpha-NTD)" evidence="1">
    <location>
        <begin position="1"/>
        <end position="227"/>
    </location>
</feature>
<feature type="region of interest" description="Alpha C-terminal domain (alpha-CTD)" evidence="1">
    <location>
        <begin position="247"/>
        <end position="333"/>
    </location>
</feature>
<organism>
    <name type="scientific">Sulfurovum sp. (strain NBC37-1)</name>
    <dbReference type="NCBI Taxonomy" id="387093"/>
    <lineage>
        <taxon>Bacteria</taxon>
        <taxon>Pseudomonadati</taxon>
        <taxon>Campylobacterota</taxon>
        <taxon>Epsilonproteobacteria</taxon>
        <taxon>Campylobacterales</taxon>
        <taxon>Sulfurovaceae</taxon>
        <taxon>Sulfurovum</taxon>
    </lineage>
</organism>
<accession>A6QCS4</accession>
<reference key="1">
    <citation type="journal article" date="2007" name="Proc. Natl. Acad. Sci. U.S.A.">
        <title>Deep-sea vent epsilon-proteobacterial genomes provide insights into emergence of pathogens.</title>
        <authorList>
            <person name="Nakagawa S."/>
            <person name="Takaki Y."/>
            <person name="Shimamura S."/>
            <person name="Reysenbach A.-L."/>
            <person name="Takai K."/>
            <person name="Horikoshi K."/>
        </authorList>
    </citation>
    <scope>NUCLEOTIDE SEQUENCE [LARGE SCALE GENOMIC DNA]</scope>
    <source>
        <strain>NBC37-1</strain>
    </source>
</reference>
<proteinExistence type="inferred from homology"/>
<evidence type="ECO:0000255" key="1">
    <source>
        <dbReference type="HAMAP-Rule" id="MF_00059"/>
    </source>
</evidence>
<sequence length="333" mass="37008">MRKIKVAPFMPTEVEVNEISANRAEIVAYPFESGYAVTLAHPLRRLILGSSIGYAPISVKIEGAAHEFDNIRGMHEDVAVFIINLKNIRFKIKDGSDRVELKYSFSGYKEVTAQDLNNDQIEVVNGDLPLATLNEDAELNFTMVIAKGIGYVPSEDLRDEVAPDSIALDAFFTPVRKANYKIEPVLVEDNPNFEKITFDIETDAQIGPVEAFTNALEVMNKQLSVFNGVLDVDISTTLPKRTNDDNELKPFLAAVDALGLSARSFNSLDRAGIKFLGELVLMSENEIKNIKNLGKKSLDETNECLVEHGFGPEFELKENTRANLVKKLEQLKA</sequence>
<gene>
    <name evidence="1" type="primary">rpoA</name>
    <name type="ordered locus">SUN_2347</name>
</gene>
<comment type="function">
    <text evidence="1">DNA-dependent RNA polymerase catalyzes the transcription of DNA into RNA using the four ribonucleoside triphosphates as substrates.</text>
</comment>
<comment type="catalytic activity">
    <reaction evidence="1">
        <text>RNA(n) + a ribonucleoside 5'-triphosphate = RNA(n+1) + diphosphate</text>
        <dbReference type="Rhea" id="RHEA:21248"/>
        <dbReference type="Rhea" id="RHEA-COMP:14527"/>
        <dbReference type="Rhea" id="RHEA-COMP:17342"/>
        <dbReference type="ChEBI" id="CHEBI:33019"/>
        <dbReference type="ChEBI" id="CHEBI:61557"/>
        <dbReference type="ChEBI" id="CHEBI:140395"/>
        <dbReference type="EC" id="2.7.7.6"/>
    </reaction>
</comment>
<comment type="subunit">
    <text evidence="1">Homodimer. The RNAP catalytic core consists of 2 alpha, 1 beta, 1 beta' and 1 omega subunit. When a sigma factor is associated with the core the holoenzyme is formed, which can initiate transcription.</text>
</comment>
<comment type="domain">
    <text evidence="1">The N-terminal domain is essential for RNAP assembly and basal transcription, whereas the C-terminal domain is involved in interaction with transcriptional regulators and with upstream promoter elements.</text>
</comment>
<comment type="similarity">
    <text evidence="1">Belongs to the RNA polymerase alpha chain family.</text>
</comment>
<name>RPOA_SULNB</name>
<keyword id="KW-0240">DNA-directed RNA polymerase</keyword>
<keyword id="KW-0548">Nucleotidyltransferase</keyword>
<keyword id="KW-0804">Transcription</keyword>
<keyword id="KW-0808">Transferase</keyword>
<protein>
    <recommendedName>
        <fullName evidence="1">DNA-directed RNA polymerase subunit alpha</fullName>
        <shortName evidence="1">RNAP subunit alpha</shortName>
        <ecNumber evidence="1">2.7.7.6</ecNumber>
    </recommendedName>
    <alternativeName>
        <fullName evidence="1">RNA polymerase subunit alpha</fullName>
    </alternativeName>
    <alternativeName>
        <fullName evidence="1">Transcriptase subunit alpha</fullName>
    </alternativeName>
</protein>
<dbReference type="EC" id="2.7.7.6" evidence="1"/>
<dbReference type="EMBL" id="AP009179">
    <property type="protein sequence ID" value="BAF73283.1"/>
    <property type="molecule type" value="Genomic_DNA"/>
</dbReference>
<dbReference type="RefSeq" id="WP_012084122.1">
    <property type="nucleotide sequence ID" value="NC_009663.1"/>
</dbReference>
<dbReference type="SMR" id="A6QCS4"/>
<dbReference type="STRING" id="387093.SUN_2347"/>
<dbReference type="KEGG" id="sun:SUN_2347"/>
<dbReference type="eggNOG" id="COG0202">
    <property type="taxonomic scope" value="Bacteria"/>
</dbReference>
<dbReference type="HOGENOM" id="CLU_053084_0_1_7"/>
<dbReference type="OrthoDB" id="9805706at2"/>
<dbReference type="Proteomes" id="UP000006378">
    <property type="component" value="Chromosome"/>
</dbReference>
<dbReference type="GO" id="GO:0005737">
    <property type="term" value="C:cytoplasm"/>
    <property type="evidence" value="ECO:0007669"/>
    <property type="project" value="UniProtKB-ARBA"/>
</dbReference>
<dbReference type="GO" id="GO:0000428">
    <property type="term" value="C:DNA-directed RNA polymerase complex"/>
    <property type="evidence" value="ECO:0007669"/>
    <property type="project" value="UniProtKB-KW"/>
</dbReference>
<dbReference type="GO" id="GO:0003677">
    <property type="term" value="F:DNA binding"/>
    <property type="evidence" value="ECO:0007669"/>
    <property type="project" value="UniProtKB-UniRule"/>
</dbReference>
<dbReference type="GO" id="GO:0003899">
    <property type="term" value="F:DNA-directed RNA polymerase activity"/>
    <property type="evidence" value="ECO:0007669"/>
    <property type="project" value="UniProtKB-UniRule"/>
</dbReference>
<dbReference type="GO" id="GO:0046983">
    <property type="term" value="F:protein dimerization activity"/>
    <property type="evidence" value="ECO:0007669"/>
    <property type="project" value="InterPro"/>
</dbReference>
<dbReference type="GO" id="GO:0006351">
    <property type="term" value="P:DNA-templated transcription"/>
    <property type="evidence" value="ECO:0007669"/>
    <property type="project" value="UniProtKB-UniRule"/>
</dbReference>
<dbReference type="CDD" id="cd06928">
    <property type="entry name" value="RNAP_alpha_NTD"/>
    <property type="match status" value="1"/>
</dbReference>
<dbReference type="Gene3D" id="1.10.150.20">
    <property type="entry name" value="5' to 3' exonuclease, C-terminal subdomain"/>
    <property type="match status" value="1"/>
</dbReference>
<dbReference type="Gene3D" id="2.170.120.12">
    <property type="entry name" value="DNA-directed RNA polymerase, insert domain"/>
    <property type="match status" value="1"/>
</dbReference>
<dbReference type="Gene3D" id="3.30.1360.10">
    <property type="entry name" value="RNA polymerase, RBP11-like subunit"/>
    <property type="match status" value="1"/>
</dbReference>
<dbReference type="HAMAP" id="MF_00059">
    <property type="entry name" value="RNApol_bact_RpoA"/>
    <property type="match status" value="1"/>
</dbReference>
<dbReference type="InterPro" id="IPR011262">
    <property type="entry name" value="DNA-dir_RNA_pol_insert"/>
</dbReference>
<dbReference type="InterPro" id="IPR011263">
    <property type="entry name" value="DNA-dir_RNA_pol_RpoA/D/Rpb3"/>
</dbReference>
<dbReference type="InterPro" id="IPR011773">
    <property type="entry name" value="DNA-dir_RpoA"/>
</dbReference>
<dbReference type="InterPro" id="IPR036603">
    <property type="entry name" value="RBP11-like"/>
</dbReference>
<dbReference type="InterPro" id="IPR011260">
    <property type="entry name" value="RNAP_asu_C"/>
</dbReference>
<dbReference type="InterPro" id="IPR036643">
    <property type="entry name" value="RNApol_insert_sf"/>
</dbReference>
<dbReference type="NCBIfam" id="NF003517">
    <property type="entry name" value="PRK05182.2-3"/>
    <property type="match status" value="1"/>
</dbReference>
<dbReference type="NCBIfam" id="TIGR02027">
    <property type="entry name" value="rpoA"/>
    <property type="match status" value="1"/>
</dbReference>
<dbReference type="Pfam" id="PF01000">
    <property type="entry name" value="RNA_pol_A_bac"/>
    <property type="match status" value="1"/>
</dbReference>
<dbReference type="Pfam" id="PF03118">
    <property type="entry name" value="RNA_pol_A_CTD"/>
    <property type="match status" value="1"/>
</dbReference>
<dbReference type="Pfam" id="PF01193">
    <property type="entry name" value="RNA_pol_L"/>
    <property type="match status" value="1"/>
</dbReference>
<dbReference type="SMART" id="SM00662">
    <property type="entry name" value="RPOLD"/>
    <property type="match status" value="1"/>
</dbReference>
<dbReference type="SUPFAM" id="SSF47789">
    <property type="entry name" value="C-terminal domain of RNA polymerase alpha subunit"/>
    <property type="match status" value="1"/>
</dbReference>
<dbReference type="SUPFAM" id="SSF56553">
    <property type="entry name" value="Insert subdomain of RNA polymerase alpha subunit"/>
    <property type="match status" value="1"/>
</dbReference>
<dbReference type="SUPFAM" id="SSF55257">
    <property type="entry name" value="RBP11-like subunits of RNA polymerase"/>
    <property type="match status" value="1"/>
</dbReference>